<organism>
    <name type="scientific">Streptococcus mutans serotype c (strain ATCC 700610 / UA159)</name>
    <dbReference type="NCBI Taxonomy" id="210007"/>
    <lineage>
        <taxon>Bacteria</taxon>
        <taxon>Bacillati</taxon>
        <taxon>Bacillota</taxon>
        <taxon>Bacilli</taxon>
        <taxon>Lactobacillales</taxon>
        <taxon>Streptococcaceae</taxon>
        <taxon>Streptococcus</taxon>
    </lineage>
</organism>
<gene>
    <name evidence="1" type="primary">rimM</name>
    <name type="ordered locus">SMU_867</name>
</gene>
<reference key="1">
    <citation type="journal article" date="2002" name="Proc. Natl. Acad. Sci. U.S.A.">
        <title>Genome sequence of Streptococcus mutans UA159, a cariogenic dental pathogen.</title>
        <authorList>
            <person name="Ajdic D.J."/>
            <person name="McShan W.M."/>
            <person name="McLaughlin R.E."/>
            <person name="Savic G."/>
            <person name="Chang J."/>
            <person name="Carson M.B."/>
            <person name="Primeaux C."/>
            <person name="Tian R."/>
            <person name="Kenton S."/>
            <person name="Jia H.G."/>
            <person name="Lin S.P."/>
            <person name="Qian Y."/>
            <person name="Li S."/>
            <person name="Zhu H."/>
            <person name="Najar F.Z."/>
            <person name="Lai H."/>
            <person name="White J."/>
            <person name="Roe B.A."/>
            <person name="Ferretti J.J."/>
        </authorList>
    </citation>
    <scope>NUCLEOTIDE SEQUENCE [LARGE SCALE GENOMIC DNA]</scope>
    <source>
        <strain>ATCC 700610 / UA159</strain>
    </source>
</reference>
<proteinExistence type="inferred from homology"/>
<feature type="chain" id="PRO_0000163364" description="Ribosome maturation factor RimM">
    <location>
        <begin position="1"/>
        <end position="172"/>
    </location>
</feature>
<feature type="domain" description="PRC barrel" evidence="1">
    <location>
        <begin position="96"/>
        <end position="168"/>
    </location>
</feature>
<sequence>MKYFNVGKIVNTQGLRGEVRVLSVTDFADERFKKGSQLALFDKKDHFAMTVEIASHRKHKNFDIVKFKGLYHINDVEKYRDFTLKVTEDHLADLEDGEFYYHEIIGLDVYENDILIGQVKEILQPGANDVWVVKRKGKKDLLLPYIPSVILKVDVPNGRIDVTVLEGLDDEN</sequence>
<accession>Q8DUN7</accession>
<comment type="function">
    <text evidence="1">An accessory protein needed during the final step in the assembly of 30S ribosomal subunit, possibly for assembly of the head region. Essential for efficient processing of 16S rRNA. May be needed both before and after RbfA during the maturation of 16S rRNA. It has affinity for free ribosomal 30S subunits but not for 70S ribosomes.</text>
</comment>
<comment type="subunit">
    <text evidence="1">Binds ribosomal protein uS19.</text>
</comment>
<comment type="subcellular location">
    <subcellularLocation>
        <location evidence="1">Cytoplasm</location>
    </subcellularLocation>
</comment>
<comment type="domain">
    <text evidence="1">The PRC barrel domain binds ribosomal protein uS19.</text>
</comment>
<comment type="similarity">
    <text evidence="1">Belongs to the RimM family.</text>
</comment>
<keyword id="KW-0143">Chaperone</keyword>
<keyword id="KW-0963">Cytoplasm</keyword>
<keyword id="KW-1185">Reference proteome</keyword>
<keyword id="KW-0690">Ribosome biogenesis</keyword>
<keyword id="KW-0698">rRNA processing</keyword>
<dbReference type="EMBL" id="AE014133">
    <property type="protein sequence ID" value="AAN58582.1"/>
    <property type="molecule type" value="Genomic_DNA"/>
</dbReference>
<dbReference type="RefSeq" id="NP_721276.1">
    <property type="nucleotide sequence ID" value="NC_004350.2"/>
</dbReference>
<dbReference type="RefSeq" id="WP_002262015.1">
    <property type="nucleotide sequence ID" value="NC_004350.2"/>
</dbReference>
<dbReference type="SMR" id="Q8DUN7"/>
<dbReference type="STRING" id="210007.SMU_867"/>
<dbReference type="DNASU" id="1028235"/>
<dbReference type="KEGG" id="smu:SMU_867"/>
<dbReference type="PATRIC" id="fig|210007.7.peg.773"/>
<dbReference type="eggNOG" id="COG0806">
    <property type="taxonomic scope" value="Bacteria"/>
</dbReference>
<dbReference type="HOGENOM" id="CLU_077636_3_1_9"/>
<dbReference type="OrthoDB" id="9810331at2"/>
<dbReference type="PhylomeDB" id="Q8DUN7"/>
<dbReference type="Proteomes" id="UP000002512">
    <property type="component" value="Chromosome"/>
</dbReference>
<dbReference type="GO" id="GO:0005737">
    <property type="term" value="C:cytoplasm"/>
    <property type="evidence" value="ECO:0007669"/>
    <property type="project" value="UniProtKB-SubCell"/>
</dbReference>
<dbReference type="GO" id="GO:0005840">
    <property type="term" value="C:ribosome"/>
    <property type="evidence" value="ECO:0007669"/>
    <property type="project" value="InterPro"/>
</dbReference>
<dbReference type="GO" id="GO:0043022">
    <property type="term" value="F:ribosome binding"/>
    <property type="evidence" value="ECO:0007669"/>
    <property type="project" value="InterPro"/>
</dbReference>
<dbReference type="GO" id="GO:0042274">
    <property type="term" value="P:ribosomal small subunit biogenesis"/>
    <property type="evidence" value="ECO:0007669"/>
    <property type="project" value="UniProtKB-UniRule"/>
</dbReference>
<dbReference type="GO" id="GO:0006364">
    <property type="term" value="P:rRNA processing"/>
    <property type="evidence" value="ECO:0007669"/>
    <property type="project" value="UniProtKB-UniRule"/>
</dbReference>
<dbReference type="Gene3D" id="2.30.30.240">
    <property type="entry name" value="PRC-barrel domain"/>
    <property type="match status" value="1"/>
</dbReference>
<dbReference type="Gene3D" id="2.40.30.60">
    <property type="entry name" value="RimM"/>
    <property type="match status" value="1"/>
</dbReference>
<dbReference type="HAMAP" id="MF_00014">
    <property type="entry name" value="Ribosome_mat_RimM"/>
    <property type="match status" value="1"/>
</dbReference>
<dbReference type="InterPro" id="IPR027275">
    <property type="entry name" value="PRC-brl_dom"/>
</dbReference>
<dbReference type="InterPro" id="IPR011033">
    <property type="entry name" value="PRC_barrel-like_sf"/>
</dbReference>
<dbReference type="InterPro" id="IPR011961">
    <property type="entry name" value="RimM"/>
</dbReference>
<dbReference type="InterPro" id="IPR002676">
    <property type="entry name" value="RimM_N"/>
</dbReference>
<dbReference type="InterPro" id="IPR036976">
    <property type="entry name" value="RimM_N_sf"/>
</dbReference>
<dbReference type="InterPro" id="IPR009000">
    <property type="entry name" value="Transl_B-barrel_sf"/>
</dbReference>
<dbReference type="NCBIfam" id="TIGR02273">
    <property type="entry name" value="16S_RimM"/>
    <property type="match status" value="1"/>
</dbReference>
<dbReference type="PANTHER" id="PTHR33692">
    <property type="entry name" value="RIBOSOME MATURATION FACTOR RIMM"/>
    <property type="match status" value="1"/>
</dbReference>
<dbReference type="PANTHER" id="PTHR33692:SF1">
    <property type="entry name" value="RIBOSOME MATURATION FACTOR RIMM"/>
    <property type="match status" value="1"/>
</dbReference>
<dbReference type="Pfam" id="PF05239">
    <property type="entry name" value="PRC"/>
    <property type="match status" value="1"/>
</dbReference>
<dbReference type="Pfam" id="PF01782">
    <property type="entry name" value="RimM"/>
    <property type="match status" value="1"/>
</dbReference>
<dbReference type="SUPFAM" id="SSF50346">
    <property type="entry name" value="PRC-barrel domain"/>
    <property type="match status" value="1"/>
</dbReference>
<dbReference type="SUPFAM" id="SSF50447">
    <property type="entry name" value="Translation proteins"/>
    <property type="match status" value="1"/>
</dbReference>
<name>RIMM_STRMU</name>
<protein>
    <recommendedName>
        <fullName evidence="1">Ribosome maturation factor RimM</fullName>
    </recommendedName>
</protein>
<evidence type="ECO:0000255" key="1">
    <source>
        <dbReference type="HAMAP-Rule" id="MF_00014"/>
    </source>
</evidence>